<comment type="subcellular location">
    <subcellularLocation>
        <location evidence="1">Cell inner membrane</location>
        <topology evidence="1">Multi-pass membrane protein</topology>
    </subcellularLocation>
</comment>
<comment type="similarity">
    <text evidence="1">Belongs to the UPF0208 family.</text>
</comment>
<reference key="1">
    <citation type="submission" date="2008-08" db="EMBL/GenBank/DDBJ databases">
        <title>Complete sequence of Vibrio fischeri strain MJ11.</title>
        <authorList>
            <person name="Mandel M.J."/>
            <person name="Stabb E.V."/>
            <person name="Ruby E.G."/>
            <person name="Ferriera S."/>
            <person name="Johnson J."/>
            <person name="Kravitz S."/>
            <person name="Beeson K."/>
            <person name="Sutton G."/>
            <person name="Rogers Y.-H."/>
            <person name="Friedman R."/>
            <person name="Frazier M."/>
            <person name="Venter J.C."/>
        </authorList>
    </citation>
    <scope>NUCLEOTIDE SEQUENCE [LARGE SCALE GENOMIC DNA]</scope>
    <source>
        <strain>MJ11</strain>
    </source>
</reference>
<feature type="chain" id="PRO_1000137004" description="UPF0208 membrane protein VFMJ11_0876">
    <location>
        <begin position="1"/>
        <end position="149"/>
    </location>
</feature>
<feature type="transmembrane region" description="Helical" evidence="1">
    <location>
        <begin position="41"/>
        <end position="61"/>
    </location>
</feature>
<feature type="transmembrane region" description="Helical" evidence="1">
    <location>
        <begin position="69"/>
        <end position="89"/>
    </location>
</feature>
<name>Y876_ALIFM</name>
<protein>
    <recommendedName>
        <fullName evidence="1">UPF0208 membrane protein VFMJ11_0876</fullName>
    </recommendedName>
</protein>
<dbReference type="EMBL" id="CP001139">
    <property type="protein sequence ID" value="ACH65835.1"/>
    <property type="molecule type" value="Genomic_DNA"/>
</dbReference>
<dbReference type="RefSeq" id="WP_005418327.1">
    <property type="nucleotide sequence ID" value="NC_011184.1"/>
</dbReference>
<dbReference type="GeneID" id="54163506"/>
<dbReference type="KEGG" id="vfm:VFMJ11_0876"/>
<dbReference type="HOGENOM" id="CLU_128746_0_0_6"/>
<dbReference type="Proteomes" id="UP000001857">
    <property type="component" value="Chromosome I"/>
</dbReference>
<dbReference type="GO" id="GO:0005886">
    <property type="term" value="C:plasma membrane"/>
    <property type="evidence" value="ECO:0007669"/>
    <property type="project" value="UniProtKB-SubCell"/>
</dbReference>
<dbReference type="HAMAP" id="MF_01101">
    <property type="entry name" value="UPF0208"/>
    <property type="match status" value="1"/>
</dbReference>
<dbReference type="InterPro" id="IPR007334">
    <property type="entry name" value="UPF0208"/>
</dbReference>
<dbReference type="NCBIfam" id="NF002493">
    <property type="entry name" value="PRK01816.1"/>
    <property type="match status" value="1"/>
</dbReference>
<dbReference type="Pfam" id="PF04217">
    <property type="entry name" value="DUF412"/>
    <property type="match status" value="1"/>
</dbReference>
<organism>
    <name type="scientific">Aliivibrio fischeri (strain MJ11)</name>
    <name type="common">Vibrio fischeri</name>
    <dbReference type="NCBI Taxonomy" id="388396"/>
    <lineage>
        <taxon>Bacteria</taxon>
        <taxon>Pseudomonadati</taxon>
        <taxon>Pseudomonadota</taxon>
        <taxon>Gammaproteobacteria</taxon>
        <taxon>Vibrionales</taxon>
        <taxon>Vibrionaceae</taxon>
        <taxon>Aliivibrio</taxon>
    </lineage>
</organism>
<gene>
    <name type="ordered locus">VFMJ11_0876</name>
</gene>
<sequence>MSENGFLFRFRDGQTYMDTWPERKELAPMFPEQRVIKATKFAVKVMPAVAVISVLTQMVFNNTAGLPQAIIIALFAISMPLQGFWWLGNRANTKLPPALASWYRELYQKIIESGAALEPMKSQPRYKELANILNKAFKQLDKTALERWF</sequence>
<evidence type="ECO:0000255" key="1">
    <source>
        <dbReference type="HAMAP-Rule" id="MF_01101"/>
    </source>
</evidence>
<proteinExistence type="inferred from homology"/>
<accession>B5FC41</accession>
<keyword id="KW-0997">Cell inner membrane</keyword>
<keyword id="KW-1003">Cell membrane</keyword>
<keyword id="KW-0472">Membrane</keyword>
<keyword id="KW-0812">Transmembrane</keyword>
<keyword id="KW-1133">Transmembrane helix</keyword>